<proteinExistence type="inferred from homology"/>
<gene>
    <name evidence="1" type="primary">dnaA</name>
    <name type="ordered locus">Abu_0001</name>
</gene>
<sequence length="438" mass="50088">MTTKEFLTIIQKEANQIDYERYLKQLVYKKVSSDNKIAIFEVNNKYIASWIKSKFTNLIQHCFEIYDGSKPTIEIKLSNEKKSKKEILKEQTQNESTESTILNPSYTFDSFVVGPSNQMAYNASLAVANKPGIQYNPLFIYGGTGLGKTHLLQAVGNHAIEKGNTVIYVTIEQFMNDFTFSIKNKNMEHFRNKYRKCDVLLIDDIQFLSGKEQTQEEFFHTFNELHNAKKQIVMTSDRLPSQIAGLVDRLKSRFEWGLTADVQIPGLETKIAIIEKKSELNGICLSREIINFIATNLDNSIREIEGVLIRINASASLLNQEITLPMVQGLLKEQIKETKENVKLPDIINIVANQLNIKPSDIKSKKRTATVANARRIVIYLVRELTHNSMPDIAKFLGMKDHSAISHNIKKANELIEKDENFKLIIENLKNKIINSRE</sequence>
<organism>
    <name type="scientific">Aliarcobacter butzleri (strain RM4018)</name>
    <name type="common">Arcobacter butzleri</name>
    <dbReference type="NCBI Taxonomy" id="367737"/>
    <lineage>
        <taxon>Bacteria</taxon>
        <taxon>Pseudomonadati</taxon>
        <taxon>Campylobacterota</taxon>
        <taxon>Epsilonproteobacteria</taxon>
        <taxon>Campylobacterales</taxon>
        <taxon>Arcobacteraceae</taxon>
        <taxon>Aliarcobacter</taxon>
    </lineage>
</organism>
<protein>
    <recommendedName>
        <fullName evidence="1">Chromosomal replication initiator protein DnaA</fullName>
    </recommendedName>
</protein>
<keyword id="KW-0067">ATP-binding</keyword>
<keyword id="KW-0963">Cytoplasm</keyword>
<keyword id="KW-0235">DNA replication</keyword>
<keyword id="KW-0238">DNA-binding</keyword>
<keyword id="KW-0446">Lipid-binding</keyword>
<keyword id="KW-0547">Nucleotide-binding</keyword>
<keyword id="KW-1185">Reference proteome</keyword>
<name>DNAA_ALIB4</name>
<accession>A8EQT0</accession>
<comment type="function">
    <text evidence="1">Plays an essential role in the initiation and regulation of chromosomal replication. ATP-DnaA binds to the origin of replication (oriC) to initiate formation of the DNA replication initiation complex once per cell cycle. Binds the DnaA box (a 9 base pair repeat at the origin) and separates the double-stranded (ds)DNA. Forms a right-handed helical filament on oriC DNA; dsDNA binds to the exterior of the filament while single-stranded (ss)DNA is stabiized in the filament's interior. The ATP-DnaA-oriC complex binds and stabilizes one strand of the AT-rich DNA unwinding element (DUE), permitting loading of DNA polymerase. After initiation quickly degrades to an ADP-DnaA complex that is not apt for DNA replication. Binds acidic phospholipids.</text>
</comment>
<comment type="subunit">
    <text evidence="1">Oligomerizes as a right-handed, spiral filament on DNA at oriC.</text>
</comment>
<comment type="subcellular location">
    <subcellularLocation>
        <location evidence="1">Cytoplasm</location>
    </subcellularLocation>
</comment>
<comment type="domain">
    <text evidence="1">Domain I is involved in oligomerization and binding regulators, domain II is flexibile and of varying length in different bacteria, domain III forms the AAA+ region, while domain IV binds dsDNA.</text>
</comment>
<comment type="similarity">
    <text evidence="1">Belongs to the DnaA family.</text>
</comment>
<reference key="1">
    <citation type="journal article" date="2007" name="PLoS ONE">
        <title>The complete genome sequence and analysis of the Epsilonproteobacterium Arcobacter butzleri.</title>
        <authorList>
            <person name="Miller W.G."/>
            <person name="Parker C.T."/>
            <person name="Rubenfield M."/>
            <person name="Mendz G.L."/>
            <person name="Woesten M.M.S.M."/>
            <person name="Ussery D.W."/>
            <person name="Stolz J.F."/>
            <person name="Binnewies T.T."/>
            <person name="Hallin P.F."/>
            <person name="Wang G."/>
            <person name="Malek J.A."/>
            <person name="Rogosin A."/>
            <person name="Stanker L.H."/>
            <person name="Mandrell R.E."/>
        </authorList>
    </citation>
    <scope>NUCLEOTIDE SEQUENCE [LARGE SCALE GENOMIC DNA]</scope>
    <source>
        <strain>RM4018</strain>
    </source>
</reference>
<feature type="chain" id="PRO_1000060008" description="Chromosomal replication initiator protein DnaA">
    <location>
        <begin position="1"/>
        <end position="438"/>
    </location>
</feature>
<feature type="region of interest" description="Domain I, interacts with DnaA modulators" evidence="1">
    <location>
        <begin position="1"/>
        <end position="71"/>
    </location>
</feature>
<feature type="region of interest" description="Domain II" evidence="1">
    <location>
        <begin position="71"/>
        <end position="100"/>
    </location>
</feature>
<feature type="region of interest" description="Domain III, AAA+ region" evidence="1">
    <location>
        <begin position="101"/>
        <end position="315"/>
    </location>
</feature>
<feature type="region of interest" description="Domain IV, binds dsDNA" evidence="1">
    <location>
        <begin position="316"/>
        <end position="438"/>
    </location>
</feature>
<feature type="binding site" evidence="1">
    <location>
        <position position="145"/>
    </location>
    <ligand>
        <name>ATP</name>
        <dbReference type="ChEBI" id="CHEBI:30616"/>
    </ligand>
</feature>
<feature type="binding site" evidence="1">
    <location>
        <position position="147"/>
    </location>
    <ligand>
        <name>ATP</name>
        <dbReference type="ChEBI" id="CHEBI:30616"/>
    </ligand>
</feature>
<feature type="binding site" evidence="1">
    <location>
        <position position="148"/>
    </location>
    <ligand>
        <name>ATP</name>
        <dbReference type="ChEBI" id="CHEBI:30616"/>
    </ligand>
</feature>
<feature type="binding site" evidence="1">
    <location>
        <position position="149"/>
    </location>
    <ligand>
        <name>ATP</name>
        <dbReference type="ChEBI" id="CHEBI:30616"/>
    </ligand>
</feature>
<dbReference type="EMBL" id="CP000361">
    <property type="protein sequence ID" value="ABV66286.1"/>
    <property type="molecule type" value="Genomic_DNA"/>
</dbReference>
<dbReference type="RefSeq" id="WP_012011924.1">
    <property type="nucleotide sequence ID" value="NC_009850.1"/>
</dbReference>
<dbReference type="SMR" id="A8EQT0"/>
<dbReference type="STRING" id="367737.Abu_0001"/>
<dbReference type="GeneID" id="24304941"/>
<dbReference type="KEGG" id="abu:Abu_0001"/>
<dbReference type="eggNOG" id="COG0593">
    <property type="taxonomic scope" value="Bacteria"/>
</dbReference>
<dbReference type="HOGENOM" id="CLU_026910_3_2_7"/>
<dbReference type="Proteomes" id="UP000001136">
    <property type="component" value="Chromosome"/>
</dbReference>
<dbReference type="GO" id="GO:0005737">
    <property type="term" value="C:cytoplasm"/>
    <property type="evidence" value="ECO:0007669"/>
    <property type="project" value="UniProtKB-SubCell"/>
</dbReference>
<dbReference type="GO" id="GO:0005886">
    <property type="term" value="C:plasma membrane"/>
    <property type="evidence" value="ECO:0007669"/>
    <property type="project" value="TreeGrafter"/>
</dbReference>
<dbReference type="GO" id="GO:0005524">
    <property type="term" value="F:ATP binding"/>
    <property type="evidence" value="ECO:0007669"/>
    <property type="project" value="UniProtKB-UniRule"/>
</dbReference>
<dbReference type="GO" id="GO:0016887">
    <property type="term" value="F:ATP hydrolysis activity"/>
    <property type="evidence" value="ECO:0007669"/>
    <property type="project" value="InterPro"/>
</dbReference>
<dbReference type="GO" id="GO:0003688">
    <property type="term" value="F:DNA replication origin binding"/>
    <property type="evidence" value="ECO:0007669"/>
    <property type="project" value="UniProtKB-UniRule"/>
</dbReference>
<dbReference type="GO" id="GO:0008289">
    <property type="term" value="F:lipid binding"/>
    <property type="evidence" value="ECO:0007669"/>
    <property type="project" value="UniProtKB-KW"/>
</dbReference>
<dbReference type="GO" id="GO:0006270">
    <property type="term" value="P:DNA replication initiation"/>
    <property type="evidence" value="ECO:0007669"/>
    <property type="project" value="UniProtKB-UniRule"/>
</dbReference>
<dbReference type="GO" id="GO:0006275">
    <property type="term" value="P:regulation of DNA replication"/>
    <property type="evidence" value="ECO:0007669"/>
    <property type="project" value="UniProtKB-UniRule"/>
</dbReference>
<dbReference type="CDD" id="cd00009">
    <property type="entry name" value="AAA"/>
    <property type="match status" value="1"/>
</dbReference>
<dbReference type="CDD" id="cd06571">
    <property type="entry name" value="Bac_DnaA_C"/>
    <property type="match status" value="1"/>
</dbReference>
<dbReference type="FunFam" id="3.40.50.300:FF:000668">
    <property type="entry name" value="Chromosomal replication initiator protein DnaA"/>
    <property type="match status" value="1"/>
</dbReference>
<dbReference type="Gene3D" id="1.10.1750.10">
    <property type="match status" value="1"/>
</dbReference>
<dbReference type="Gene3D" id="1.10.8.60">
    <property type="match status" value="1"/>
</dbReference>
<dbReference type="Gene3D" id="3.30.300.180">
    <property type="match status" value="1"/>
</dbReference>
<dbReference type="Gene3D" id="3.40.50.300">
    <property type="entry name" value="P-loop containing nucleotide triphosphate hydrolases"/>
    <property type="match status" value="1"/>
</dbReference>
<dbReference type="HAMAP" id="MF_00377">
    <property type="entry name" value="DnaA_bact"/>
    <property type="match status" value="1"/>
</dbReference>
<dbReference type="InterPro" id="IPR003593">
    <property type="entry name" value="AAA+_ATPase"/>
</dbReference>
<dbReference type="InterPro" id="IPR001957">
    <property type="entry name" value="Chromosome_initiator_DnaA"/>
</dbReference>
<dbReference type="InterPro" id="IPR020591">
    <property type="entry name" value="Chromosome_initiator_DnaA-like"/>
</dbReference>
<dbReference type="InterPro" id="IPR013159">
    <property type="entry name" value="DnaA_C"/>
</dbReference>
<dbReference type="InterPro" id="IPR013317">
    <property type="entry name" value="DnaA_dom"/>
</dbReference>
<dbReference type="InterPro" id="IPR024633">
    <property type="entry name" value="DnaA_N_dom"/>
</dbReference>
<dbReference type="InterPro" id="IPR038454">
    <property type="entry name" value="DnaA_N_sf"/>
</dbReference>
<dbReference type="InterPro" id="IPR027417">
    <property type="entry name" value="P-loop_NTPase"/>
</dbReference>
<dbReference type="InterPro" id="IPR010921">
    <property type="entry name" value="Trp_repressor/repl_initiator"/>
</dbReference>
<dbReference type="NCBIfam" id="TIGR00362">
    <property type="entry name" value="DnaA"/>
    <property type="match status" value="1"/>
</dbReference>
<dbReference type="PANTHER" id="PTHR30050">
    <property type="entry name" value="CHROMOSOMAL REPLICATION INITIATOR PROTEIN DNAA"/>
    <property type="match status" value="1"/>
</dbReference>
<dbReference type="PANTHER" id="PTHR30050:SF2">
    <property type="entry name" value="CHROMOSOMAL REPLICATION INITIATOR PROTEIN DNAA"/>
    <property type="match status" value="1"/>
</dbReference>
<dbReference type="Pfam" id="PF00308">
    <property type="entry name" value="Bac_DnaA"/>
    <property type="match status" value="1"/>
</dbReference>
<dbReference type="Pfam" id="PF08299">
    <property type="entry name" value="Bac_DnaA_C"/>
    <property type="match status" value="1"/>
</dbReference>
<dbReference type="Pfam" id="PF11638">
    <property type="entry name" value="DnaA_N"/>
    <property type="match status" value="1"/>
</dbReference>
<dbReference type="PRINTS" id="PR00051">
    <property type="entry name" value="DNAA"/>
</dbReference>
<dbReference type="SMART" id="SM00382">
    <property type="entry name" value="AAA"/>
    <property type="match status" value="1"/>
</dbReference>
<dbReference type="SMART" id="SM00760">
    <property type="entry name" value="Bac_DnaA_C"/>
    <property type="match status" value="1"/>
</dbReference>
<dbReference type="SUPFAM" id="SSF52540">
    <property type="entry name" value="P-loop containing nucleoside triphosphate hydrolases"/>
    <property type="match status" value="1"/>
</dbReference>
<dbReference type="SUPFAM" id="SSF48295">
    <property type="entry name" value="TrpR-like"/>
    <property type="match status" value="1"/>
</dbReference>
<evidence type="ECO:0000255" key="1">
    <source>
        <dbReference type="HAMAP-Rule" id="MF_00377"/>
    </source>
</evidence>